<name>RIMP_HELHP</name>
<dbReference type="EMBL" id="AE017125">
    <property type="protein sequence ID" value="AAP77436.1"/>
    <property type="molecule type" value="Genomic_DNA"/>
</dbReference>
<dbReference type="RefSeq" id="WP_011115679.1">
    <property type="nucleotide sequence ID" value="NC_004917.1"/>
</dbReference>
<dbReference type="SMR" id="P59821"/>
<dbReference type="STRING" id="235279.HH_0839"/>
<dbReference type="KEGG" id="hhe:HH_0839"/>
<dbReference type="eggNOG" id="COG0779">
    <property type="taxonomic scope" value="Bacteria"/>
</dbReference>
<dbReference type="HOGENOM" id="CLU_070525_2_2_7"/>
<dbReference type="OrthoDB" id="9805006at2"/>
<dbReference type="Proteomes" id="UP000002495">
    <property type="component" value="Chromosome"/>
</dbReference>
<dbReference type="GO" id="GO:0005829">
    <property type="term" value="C:cytosol"/>
    <property type="evidence" value="ECO:0007669"/>
    <property type="project" value="TreeGrafter"/>
</dbReference>
<dbReference type="GO" id="GO:0000028">
    <property type="term" value="P:ribosomal small subunit assembly"/>
    <property type="evidence" value="ECO:0007669"/>
    <property type="project" value="TreeGrafter"/>
</dbReference>
<dbReference type="GO" id="GO:0006412">
    <property type="term" value="P:translation"/>
    <property type="evidence" value="ECO:0007669"/>
    <property type="project" value="TreeGrafter"/>
</dbReference>
<dbReference type="CDD" id="cd01734">
    <property type="entry name" value="YlxS_C"/>
    <property type="match status" value="1"/>
</dbReference>
<dbReference type="Gene3D" id="3.30.300.70">
    <property type="entry name" value="RimP-like superfamily, N-terminal"/>
    <property type="match status" value="1"/>
</dbReference>
<dbReference type="HAMAP" id="MF_01077">
    <property type="entry name" value="RimP"/>
    <property type="match status" value="1"/>
</dbReference>
<dbReference type="InterPro" id="IPR003728">
    <property type="entry name" value="Ribosome_maturation_RimP"/>
</dbReference>
<dbReference type="InterPro" id="IPR028998">
    <property type="entry name" value="RimP_C"/>
</dbReference>
<dbReference type="InterPro" id="IPR036847">
    <property type="entry name" value="RimP_C_sf"/>
</dbReference>
<dbReference type="InterPro" id="IPR028989">
    <property type="entry name" value="RimP_N"/>
</dbReference>
<dbReference type="InterPro" id="IPR035956">
    <property type="entry name" value="RimP_N_sf"/>
</dbReference>
<dbReference type="PANTHER" id="PTHR33867">
    <property type="entry name" value="RIBOSOME MATURATION FACTOR RIMP"/>
    <property type="match status" value="1"/>
</dbReference>
<dbReference type="PANTHER" id="PTHR33867:SF1">
    <property type="entry name" value="RIBOSOME MATURATION FACTOR RIMP"/>
    <property type="match status" value="1"/>
</dbReference>
<dbReference type="Pfam" id="PF17384">
    <property type="entry name" value="DUF150_C"/>
    <property type="match status" value="1"/>
</dbReference>
<dbReference type="Pfam" id="PF02576">
    <property type="entry name" value="RimP_N"/>
    <property type="match status" value="1"/>
</dbReference>
<dbReference type="SUPFAM" id="SSF74942">
    <property type="entry name" value="YhbC-like, C-terminal domain"/>
    <property type="match status" value="1"/>
</dbReference>
<dbReference type="SUPFAM" id="SSF75420">
    <property type="entry name" value="YhbC-like, N-terminal domain"/>
    <property type="match status" value="1"/>
</dbReference>
<proteinExistence type="inferred from homology"/>
<organism>
    <name type="scientific">Helicobacter hepaticus (strain ATCC 51449 / 3B1)</name>
    <dbReference type="NCBI Taxonomy" id="235279"/>
    <lineage>
        <taxon>Bacteria</taxon>
        <taxon>Pseudomonadati</taxon>
        <taxon>Campylobacterota</taxon>
        <taxon>Epsilonproteobacteria</taxon>
        <taxon>Campylobacterales</taxon>
        <taxon>Helicobacteraceae</taxon>
        <taxon>Helicobacter</taxon>
    </lineage>
</organism>
<gene>
    <name evidence="1" type="primary">rimP</name>
    <name type="ordered locus">HH_0839</name>
</gene>
<sequence length="157" mass="17844">MLSQHTQARIEQLAATLGLYIYDIDFFKEDNRPILRVSITRKAPMQKQDCKNGLAVSLQDCQNVSELISPLLDVEDENLKDYNLEVSSPGLERVLKKPQHYIYSLGEKVSIKLMDKSVIEGILHDVNENVSISIDTGKEILSFSFADMKKIKVVFEL</sequence>
<accession>P59821</accession>
<feature type="chain" id="PRO_0000181877" description="Ribosome maturation factor RimP">
    <location>
        <begin position="1"/>
        <end position="157"/>
    </location>
</feature>
<keyword id="KW-0963">Cytoplasm</keyword>
<keyword id="KW-1185">Reference proteome</keyword>
<keyword id="KW-0690">Ribosome biogenesis</keyword>
<reference key="1">
    <citation type="journal article" date="2003" name="Proc. Natl. Acad. Sci. U.S.A.">
        <title>The complete genome sequence of the carcinogenic bacterium Helicobacter hepaticus.</title>
        <authorList>
            <person name="Suerbaum S."/>
            <person name="Josenhans C."/>
            <person name="Sterzenbach T."/>
            <person name="Drescher B."/>
            <person name="Brandt P."/>
            <person name="Bell M."/>
            <person name="Droege M."/>
            <person name="Fartmann B."/>
            <person name="Fischer H.-P."/>
            <person name="Ge Z."/>
            <person name="Hoerster A."/>
            <person name="Holland R."/>
            <person name="Klein K."/>
            <person name="Koenig J."/>
            <person name="Macko L."/>
            <person name="Mendz G.L."/>
            <person name="Nyakatura G."/>
            <person name="Schauer D.B."/>
            <person name="Shen Z."/>
            <person name="Weber J."/>
            <person name="Frosch M."/>
            <person name="Fox J.G."/>
        </authorList>
    </citation>
    <scope>NUCLEOTIDE SEQUENCE [LARGE SCALE GENOMIC DNA]</scope>
    <source>
        <strain>ATCC 51449 / 3B1</strain>
    </source>
</reference>
<protein>
    <recommendedName>
        <fullName evidence="1">Ribosome maturation factor RimP</fullName>
    </recommendedName>
</protein>
<comment type="function">
    <text evidence="1">Required for maturation of 30S ribosomal subunits.</text>
</comment>
<comment type="subcellular location">
    <subcellularLocation>
        <location evidence="1">Cytoplasm</location>
    </subcellularLocation>
</comment>
<comment type="similarity">
    <text evidence="1">Belongs to the RimP family.</text>
</comment>
<evidence type="ECO:0000255" key="1">
    <source>
        <dbReference type="HAMAP-Rule" id="MF_01077"/>
    </source>
</evidence>